<keyword id="KW-0002">3D-structure</keyword>
<keyword id="KW-1015">Disulfide bond</keyword>
<keyword id="KW-0249">Electron transport</keyword>
<keyword id="KW-0408">Iron</keyword>
<keyword id="KW-0472">Membrane</keyword>
<keyword id="KW-0479">Metal-binding</keyword>
<keyword id="KW-0496">Mitochondrion</keyword>
<keyword id="KW-0999">Mitochondrion inner membrane</keyword>
<keyword id="KW-0560">Oxidoreductase</keyword>
<keyword id="KW-0679">Respiratory chain</keyword>
<keyword id="KW-0809">Transit peptide</keyword>
<keyword id="KW-0812">Transmembrane</keyword>
<keyword id="KW-1133">Transmembrane helix</keyword>
<keyword id="KW-0813">Transport</keyword>
<accession>Q26710</accession>
<accession>Q8WPA4</accession>
<name>AOX_TRYBB</name>
<reference key="1">
    <citation type="journal article" date="1996" name="Mol. Biochem. Parasitol.">
        <title>Cloning, sequencing, and functional activity of the Trypanosoma brucei brucei alternative oxidase.</title>
        <authorList>
            <person name="Chaudhuri M."/>
            <person name="Hill G.C."/>
        </authorList>
    </citation>
    <scope>NUCLEOTIDE SEQUENCE [MRNA]</scope>
    <source>
        <strain>EATRO 110</strain>
    </source>
</reference>
<reference key="2">
    <citation type="submission" date="2004-03" db="EMBL/GenBank/DDBJ databases">
        <authorList>
            <person name="Hill G.C."/>
            <person name="Chaudhuri M."/>
            <person name="Ott R."/>
        </authorList>
    </citation>
    <scope>SEQUENCE REVISION</scope>
</reference>
<reference key="3">
    <citation type="journal article" date="2002" name="Parasitol. Int.">
        <title>Strain-specific difference in amino acid sequences of trypanosome alternative oxidase.</title>
        <authorList>
            <person name="Fukai Y."/>
            <person name="Nihei C."/>
            <person name="Yabu Y."/>
            <person name="Suzuki T."/>
            <person name="Ohta N."/>
            <person name="Minagawa N."/>
            <person name="Nagai K."/>
            <person name="Kita K."/>
        </authorList>
    </citation>
    <scope>NUCLEOTIDE SEQUENCE [MRNA]</scope>
    <source>
        <strain>ILTat 1.4</strain>
        <strain>TC221</strain>
    </source>
</reference>
<reference key="4">
    <citation type="journal article" date="1999" name="FEBS Lett.">
        <title>A revised model of the active site of alternative oxidase.</title>
        <authorList>
            <person name="Andersson M.E."/>
            <person name="Nordlund P."/>
        </authorList>
    </citation>
    <scope>IRON-BINDING SITES</scope>
</reference>
<reference key="5">
    <citation type="journal article" date="2013" name="Proc. Natl. Acad. Sci. U.S.A.">
        <title>Structure of the trypanosome cyanide-insensitive alternative oxidase.</title>
        <authorList>
            <person name="Shiba T."/>
            <person name="Kido Y."/>
            <person name="Sakamoto K."/>
            <person name="Inaoka D.K."/>
            <person name="Tsuge C."/>
            <person name="Tatsumi R."/>
            <person name="Takahashi G."/>
            <person name="Balogun E.O."/>
            <person name="Nara T."/>
            <person name="Aoki T."/>
            <person name="Honma T."/>
            <person name="Tanaka A."/>
            <person name="Inoue M."/>
            <person name="Matsuoka S."/>
            <person name="Saimoto H."/>
            <person name="Moore A.L."/>
            <person name="Harada S."/>
            <person name="Kita K."/>
        </authorList>
    </citation>
    <scope>X-RAY CRYSTALLOGRAPHY (2.30 ANGSTROMS) IN COMPLEX WITH IRON IONS</scope>
</reference>
<evidence type="ECO:0000255" key="1"/>
<evidence type="ECO:0000256" key="2">
    <source>
        <dbReference type="SAM" id="MobiDB-lite"/>
    </source>
</evidence>
<evidence type="ECO:0000269" key="3">
    <source>
    </source>
</evidence>
<evidence type="ECO:0000305" key="4"/>
<evidence type="ECO:0007744" key="5">
    <source>
        <dbReference type="PDB" id="3W54"/>
    </source>
</evidence>
<evidence type="ECO:0007829" key="6">
    <source>
        <dbReference type="PDB" id="3VV9"/>
    </source>
</evidence>
<evidence type="ECO:0007829" key="7">
    <source>
        <dbReference type="PDB" id="3W54"/>
    </source>
</evidence>
<evidence type="ECO:0007829" key="8">
    <source>
        <dbReference type="PDB" id="5GN7"/>
    </source>
</evidence>
<proteinExistence type="evidence at protein level"/>
<feature type="transit peptide" description="Mitochondrion" evidence="1">
    <location>
        <begin position="1"/>
        <end status="unknown"/>
    </location>
</feature>
<feature type="chain" id="PRO_0000001730" description="Alternative oxidase, mitochondrial">
    <location>
        <begin status="unknown"/>
        <end position="329"/>
    </location>
</feature>
<feature type="transmembrane region" description="Helical" evidence="1">
    <location>
        <begin position="115"/>
        <end position="135"/>
    </location>
</feature>
<feature type="transmembrane region" description="Helical" evidence="1">
    <location>
        <begin position="181"/>
        <end position="201"/>
    </location>
</feature>
<feature type="region of interest" description="Disordered" evidence="2">
    <location>
        <begin position="300"/>
        <end position="329"/>
    </location>
</feature>
<feature type="binding site" evidence="3 5">
    <location>
        <position position="123"/>
    </location>
    <ligand>
        <name>Fe cation</name>
        <dbReference type="ChEBI" id="CHEBI:24875"/>
        <label>1</label>
    </ligand>
</feature>
<feature type="binding site" evidence="3 5">
    <location>
        <position position="162"/>
    </location>
    <ligand>
        <name>Fe cation</name>
        <dbReference type="ChEBI" id="CHEBI:24875"/>
        <label>1</label>
    </ligand>
</feature>
<feature type="binding site" evidence="3 5">
    <location>
        <position position="162"/>
    </location>
    <ligand>
        <name>Fe cation</name>
        <dbReference type="ChEBI" id="CHEBI:24875"/>
        <label>2</label>
    </ligand>
</feature>
<feature type="binding site" evidence="3 5">
    <location>
        <position position="165"/>
    </location>
    <ligand>
        <name>Fe cation</name>
        <dbReference type="ChEBI" id="CHEBI:24875"/>
        <label>1</label>
    </ligand>
</feature>
<feature type="binding site" evidence="3 5">
    <location>
        <position position="213"/>
    </location>
    <ligand>
        <name>Fe cation</name>
        <dbReference type="ChEBI" id="CHEBI:24875"/>
        <label>2</label>
    </ligand>
</feature>
<feature type="binding site" evidence="3 5">
    <location>
        <position position="266"/>
    </location>
    <ligand>
        <name>Fe cation</name>
        <dbReference type="ChEBI" id="CHEBI:24875"/>
        <label>1</label>
    </ligand>
</feature>
<feature type="binding site" evidence="3 5">
    <location>
        <position position="266"/>
    </location>
    <ligand>
        <name>Fe cation</name>
        <dbReference type="ChEBI" id="CHEBI:24875"/>
        <label>2</label>
    </ligand>
</feature>
<feature type="binding site" evidence="3 5">
    <location>
        <position position="269"/>
    </location>
    <ligand>
        <name>Fe cation</name>
        <dbReference type="ChEBI" id="CHEBI:24875"/>
        <label>2</label>
    </ligand>
</feature>
<feature type="disulfide bond" description="Interchain" evidence="1">
    <location>
        <position position="95"/>
    </location>
</feature>
<feature type="helix" evidence="7">
    <location>
        <begin position="35"/>
        <end position="38"/>
    </location>
</feature>
<feature type="helix" evidence="7">
    <location>
        <begin position="44"/>
        <end position="49"/>
    </location>
</feature>
<feature type="helix" evidence="7">
    <location>
        <begin position="54"/>
        <end position="56"/>
    </location>
</feature>
<feature type="helix" evidence="7">
    <location>
        <begin position="67"/>
        <end position="70"/>
    </location>
</feature>
<feature type="helix" evidence="7">
    <location>
        <begin position="83"/>
        <end position="102"/>
    </location>
</feature>
<feature type="strand" evidence="7">
    <location>
        <begin position="106"/>
        <end position="108"/>
    </location>
</feature>
<feature type="helix" evidence="7">
    <location>
        <begin position="112"/>
        <end position="126"/>
    </location>
</feature>
<feature type="helix" evidence="7">
    <location>
        <begin position="129"/>
        <end position="144"/>
    </location>
</feature>
<feature type="helix" evidence="7">
    <location>
        <begin position="151"/>
        <end position="172"/>
    </location>
</feature>
<feature type="helix" evidence="7">
    <location>
        <begin position="177"/>
        <end position="200"/>
    </location>
</feature>
<feature type="helix" evidence="7">
    <location>
        <begin position="202"/>
        <end position="228"/>
    </location>
</feature>
<feature type="strand" evidence="8">
    <location>
        <begin position="230"/>
        <end position="232"/>
    </location>
</feature>
<feature type="helix" evidence="7">
    <location>
        <begin position="241"/>
        <end position="246"/>
    </location>
</feature>
<feature type="helix" evidence="7">
    <location>
        <begin position="255"/>
        <end position="281"/>
    </location>
</feature>
<feature type="strand" evidence="8">
    <location>
        <begin position="285"/>
        <end position="287"/>
    </location>
</feature>
<feature type="helix" evidence="7">
    <location>
        <begin position="290"/>
        <end position="292"/>
    </location>
</feature>
<feature type="turn" evidence="6">
    <location>
        <begin position="294"/>
        <end position="296"/>
    </location>
</feature>
<gene>
    <name type="primary">AOX</name>
</gene>
<protein>
    <recommendedName>
        <fullName>Alternative oxidase, mitochondrial</fullName>
        <ecNumber>1.-.-.-</ecNumber>
    </recommendedName>
</protein>
<dbReference type="EC" id="1.-.-.-"/>
<dbReference type="EMBL" id="U52964">
    <property type="protein sequence ID" value="AAB46424.2"/>
    <property type="molecule type" value="mRNA"/>
</dbReference>
<dbReference type="EMBL" id="AB070614">
    <property type="protein sequence ID" value="BAB72245.1"/>
    <property type="molecule type" value="mRNA"/>
</dbReference>
<dbReference type="EMBL" id="AB070617">
    <property type="protein sequence ID" value="BAB72256.1"/>
    <property type="molecule type" value="mRNA"/>
</dbReference>
<dbReference type="PDB" id="3VV9">
    <property type="method" value="X-ray"/>
    <property type="resolution" value="2.85 A"/>
    <property type="chains" value="A/B/C/D=1-329"/>
</dbReference>
<dbReference type="PDB" id="3VVA">
    <property type="method" value="X-ray"/>
    <property type="resolution" value="2.59 A"/>
    <property type="chains" value="A/B/C/D=1-329"/>
</dbReference>
<dbReference type="PDB" id="3W54">
    <property type="method" value="X-ray"/>
    <property type="resolution" value="2.30 A"/>
    <property type="chains" value="A/B/C/D=1-329"/>
</dbReference>
<dbReference type="PDB" id="5GN7">
    <property type="method" value="X-ray"/>
    <property type="resolution" value="3.20 A"/>
    <property type="chains" value="A/B/C/D=1-329"/>
</dbReference>
<dbReference type="PDB" id="5GN9">
    <property type="method" value="X-ray"/>
    <property type="resolution" value="3.20 A"/>
    <property type="chains" value="A/B/C/D=1-329"/>
</dbReference>
<dbReference type="PDB" id="5ZDP">
    <property type="method" value="X-ray"/>
    <property type="resolution" value="2.71 A"/>
    <property type="chains" value="A/B/C/D=1-329"/>
</dbReference>
<dbReference type="PDB" id="5ZDQ">
    <property type="method" value="X-ray"/>
    <property type="resolution" value="2.30 A"/>
    <property type="chains" value="A/B/C/D=1-329"/>
</dbReference>
<dbReference type="PDB" id="5ZDR">
    <property type="method" value="X-ray"/>
    <property type="resolution" value="2.59 A"/>
    <property type="chains" value="A/B/C/D=1-329"/>
</dbReference>
<dbReference type="PDBsum" id="3VV9"/>
<dbReference type="PDBsum" id="3VVA"/>
<dbReference type="PDBsum" id="3W54"/>
<dbReference type="PDBsum" id="5GN7"/>
<dbReference type="PDBsum" id="5GN9"/>
<dbReference type="PDBsum" id="5ZDP"/>
<dbReference type="PDBsum" id="5ZDQ"/>
<dbReference type="PDBsum" id="5ZDR"/>
<dbReference type="SMR" id="Q26710"/>
<dbReference type="BindingDB" id="Q26710"/>
<dbReference type="ChEMBL" id="CHEMBL4295594"/>
<dbReference type="OMA" id="VHTYTRA"/>
<dbReference type="BRENDA" id="1.10.3.11">
    <property type="organism ID" value="6519"/>
</dbReference>
<dbReference type="EvolutionaryTrace" id="Q26710"/>
<dbReference type="GO" id="GO:0005743">
    <property type="term" value="C:mitochondrial inner membrane"/>
    <property type="evidence" value="ECO:0000314"/>
    <property type="project" value="GeneDB"/>
</dbReference>
<dbReference type="GO" id="GO:0005739">
    <property type="term" value="C:mitochondrion"/>
    <property type="evidence" value="ECO:0000314"/>
    <property type="project" value="GeneDB"/>
</dbReference>
<dbReference type="GO" id="GO:0009916">
    <property type="term" value="F:alternative oxidase activity"/>
    <property type="evidence" value="ECO:0000314"/>
    <property type="project" value="GeneDB"/>
</dbReference>
<dbReference type="GO" id="GO:0008199">
    <property type="term" value="F:ferric iron binding"/>
    <property type="evidence" value="ECO:0000314"/>
    <property type="project" value="GeneDB"/>
</dbReference>
<dbReference type="GO" id="GO:0016491">
    <property type="term" value="F:oxidoreductase activity"/>
    <property type="evidence" value="ECO:0000304"/>
    <property type="project" value="GeneDB"/>
</dbReference>
<dbReference type="GO" id="GO:0010230">
    <property type="term" value="P:alternative respiration"/>
    <property type="evidence" value="ECO:0007669"/>
    <property type="project" value="TreeGrafter"/>
</dbReference>
<dbReference type="CDD" id="cd01053">
    <property type="entry name" value="AOX"/>
    <property type="match status" value="1"/>
</dbReference>
<dbReference type="FunFam" id="1.20.1260.140:FF:000002">
    <property type="entry name" value="Alternative oxidase"/>
    <property type="match status" value="1"/>
</dbReference>
<dbReference type="Gene3D" id="1.20.1260.140">
    <property type="entry name" value="Alternative oxidase"/>
    <property type="match status" value="1"/>
</dbReference>
<dbReference type="InterPro" id="IPR002680">
    <property type="entry name" value="AOX"/>
</dbReference>
<dbReference type="InterPro" id="IPR038659">
    <property type="entry name" value="AOX_sf"/>
</dbReference>
<dbReference type="PANTHER" id="PTHR31803">
    <property type="entry name" value="ALTERNATIVE OXIDASE"/>
    <property type="match status" value="1"/>
</dbReference>
<dbReference type="PANTHER" id="PTHR31803:SF3">
    <property type="entry name" value="ALTERNATIVE OXIDASE"/>
    <property type="match status" value="1"/>
</dbReference>
<dbReference type="Pfam" id="PF01786">
    <property type="entry name" value="AOX"/>
    <property type="match status" value="1"/>
</dbReference>
<dbReference type="PIRSF" id="PIRSF005229">
    <property type="entry name" value="AOX"/>
    <property type="match status" value="1"/>
</dbReference>
<comment type="function">
    <text>Catalyzes cyanide-resistant oxygen consumption. May increase respiration when the cytochrome respiratory pathway is restricted, or in response to low temperatures.</text>
</comment>
<comment type="cofactor">
    <cofactor evidence="3">
        <name>Fe cation</name>
        <dbReference type="ChEBI" id="CHEBI:24875"/>
    </cofactor>
    <text evidence="3">Binds 2 iron ions per subunit.</text>
</comment>
<comment type="subunit">
    <text evidence="4">Homodimer; disulfide-linked.</text>
</comment>
<comment type="subcellular location">
    <subcellularLocation>
        <location evidence="4">Mitochondrion inner membrane</location>
        <topology evidence="4">Multi-pass membrane protein</topology>
    </subcellularLocation>
    <text>Mitochondrial, possibly in the inner surface of the inner mitochondrial membrane.</text>
</comment>
<comment type="similarity">
    <text evidence="4">Belongs to the alternative oxidase family.</text>
</comment>
<sequence>MFRNHASRITAAAAPWVLRTACRQKSDAKTPVWGHTQLNRLSFLETVPVVPLRVSDESSEDRPTWSLPDIENVAITHKKPNGLVDTLAYRSVRTCRWLFDTFSLYRFGSITESKVISRCLFLETVAGVPGMVGGMLRHLSSLRYMTRDKGWINTLLVEAENERMHLMTFIELRQPGLPLRVSIIITQAIMYLFLLVAYVISPRFVHRFVGYLEEEAVITYTGVMRAIDEGRLRPTKNDVPEVARVYWNLSKNATFRDLINVIRADEAEHRVVNHTFADMHEKRLQNSVNPFVVLKKNPEEMYSNQPSGKTRTDFGSEGAKTASNVNKHV</sequence>
<organism>
    <name type="scientific">Trypanosoma brucei brucei</name>
    <dbReference type="NCBI Taxonomy" id="5702"/>
    <lineage>
        <taxon>Eukaryota</taxon>
        <taxon>Discoba</taxon>
        <taxon>Euglenozoa</taxon>
        <taxon>Kinetoplastea</taxon>
        <taxon>Metakinetoplastina</taxon>
        <taxon>Trypanosomatida</taxon>
        <taxon>Trypanosomatidae</taxon>
        <taxon>Trypanosoma</taxon>
    </lineage>
</organism>